<dbReference type="EC" id="4.1.99.17" evidence="1"/>
<dbReference type="EMBL" id="CP000100">
    <property type="protein sequence ID" value="ABB57126.1"/>
    <property type="molecule type" value="Genomic_DNA"/>
</dbReference>
<dbReference type="RefSeq" id="WP_011377861.1">
    <property type="nucleotide sequence ID" value="NZ_JACJTX010000003.1"/>
</dbReference>
<dbReference type="SMR" id="Q31P93"/>
<dbReference type="STRING" id="1140.Synpcc7942_1096"/>
<dbReference type="PaxDb" id="1140-Synpcc7942_1096"/>
<dbReference type="GeneID" id="72429950"/>
<dbReference type="KEGG" id="syf:Synpcc7942_1096"/>
<dbReference type="eggNOG" id="COG0422">
    <property type="taxonomic scope" value="Bacteria"/>
</dbReference>
<dbReference type="HOGENOM" id="CLU_013181_2_1_3"/>
<dbReference type="OrthoDB" id="9805897at2"/>
<dbReference type="BioCyc" id="SYNEL:SYNPCC7942_1096-MONOMER"/>
<dbReference type="UniPathway" id="UPA00060"/>
<dbReference type="Proteomes" id="UP000889800">
    <property type="component" value="Chromosome"/>
</dbReference>
<dbReference type="GO" id="GO:0005829">
    <property type="term" value="C:cytosol"/>
    <property type="evidence" value="ECO:0007669"/>
    <property type="project" value="TreeGrafter"/>
</dbReference>
<dbReference type="GO" id="GO:0051539">
    <property type="term" value="F:4 iron, 4 sulfur cluster binding"/>
    <property type="evidence" value="ECO:0007669"/>
    <property type="project" value="UniProtKB-KW"/>
</dbReference>
<dbReference type="GO" id="GO:0016830">
    <property type="term" value="F:carbon-carbon lyase activity"/>
    <property type="evidence" value="ECO:0007669"/>
    <property type="project" value="InterPro"/>
</dbReference>
<dbReference type="GO" id="GO:0008270">
    <property type="term" value="F:zinc ion binding"/>
    <property type="evidence" value="ECO:0007669"/>
    <property type="project" value="UniProtKB-UniRule"/>
</dbReference>
<dbReference type="GO" id="GO:0009228">
    <property type="term" value="P:thiamine biosynthetic process"/>
    <property type="evidence" value="ECO:0007669"/>
    <property type="project" value="UniProtKB-KW"/>
</dbReference>
<dbReference type="GO" id="GO:0009229">
    <property type="term" value="P:thiamine diphosphate biosynthetic process"/>
    <property type="evidence" value="ECO:0007669"/>
    <property type="project" value="UniProtKB-UniRule"/>
</dbReference>
<dbReference type="FunFam" id="3.20.20.540:FF:000001">
    <property type="entry name" value="Phosphomethylpyrimidine synthase"/>
    <property type="match status" value="1"/>
</dbReference>
<dbReference type="Gene3D" id="6.10.250.620">
    <property type="match status" value="1"/>
</dbReference>
<dbReference type="Gene3D" id="3.20.20.540">
    <property type="entry name" value="Radical SAM ThiC family, central domain"/>
    <property type="match status" value="1"/>
</dbReference>
<dbReference type="HAMAP" id="MF_00089">
    <property type="entry name" value="ThiC"/>
    <property type="match status" value="1"/>
</dbReference>
<dbReference type="InterPro" id="IPR037509">
    <property type="entry name" value="ThiC"/>
</dbReference>
<dbReference type="InterPro" id="IPR038521">
    <property type="entry name" value="ThiC/Bza_core_dom"/>
</dbReference>
<dbReference type="InterPro" id="IPR002817">
    <property type="entry name" value="ThiC/BzaA/B"/>
</dbReference>
<dbReference type="NCBIfam" id="NF006763">
    <property type="entry name" value="PRK09284.1"/>
    <property type="match status" value="1"/>
</dbReference>
<dbReference type="NCBIfam" id="NF009895">
    <property type="entry name" value="PRK13352.1"/>
    <property type="match status" value="1"/>
</dbReference>
<dbReference type="NCBIfam" id="TIGR00190">
    <property type="entry name" value="thiC"/>
    <property type="match status" value="1"/>
</dbReference>
<dbReference type="PANTHER" id="PTHR30557:SF1">
    <property type="entry name" value="PHOSPHOMETHYLPYRIMIDINE SYNTHASE, CHLOROPLASTIC"/>
    <property type="match status" value="1"/>
</dbReference>
<dbReference type="PANTHER" id="PTHR30557">
    <property type="entry name" value="THIAMINE BIOSYNTHESIS PROTEIN THIC"/>
    <property type="match status" value="1"/>
</dbReference>
<dbReference type="Pfam" id="PF01964">
    <property type="entry name" value="ThiC_Rad_SAM"/>
    <property type="match status" value="1"/>
</dbReference>
<dbReference type="SFLD" id="SFLDF00407">
    <property type="entry name" value="phosphomethylpyrimidine_syntha"/>
    <property type="match status" value="1"/>
</dbReference>
<dbReference type="SFLD" id="SFLDG01114">
    <property type="entry name" value="phosphomethylpyrimidine_syntha"/>
    <property type="match status" value="1"/>
</dbReference>
<dbReference type="SFLD" id="SFLDS00113">
    <property type="entry name" value="Radical_SAM_Phosphomethylpyrim"/>
    <property type="match status" value="1"/>
</dbReference>
<reference key="1">
    <citation type="submission" date="2005-08" db="EMBL/GenBank/DDBJ databases">
        <title>Complete sequence of chromosome 1 of Synechococcus elongatus PCC 7942.</title>
        <authorList>
            <consortium name="US DOE Joint Genome Institute"/>
            <person name="Copeland A."/>
            <person name="Lucas S."/>
            <person name="Lapidus A."/>
            <person name="Barry K."/>
            <person name="Detter J.C."/>
            <person name="Glavina T."/>
            <person name="Hammon N."/>
            <person name="Israni S."/>
            <person name="Pitluck S."/>
            <person name="Schmutz J."/>
            <person name="Larimer F."/>
            <person name="Land M."/>
            <person name="Kyrpides N."/>
            <person name="Lykidis A."/>
            <person name="Golden S."/>
            <person name="Richardson P."/>
        </authorList>
    </citation>
    <scope>NUCLEOTIDE SEQUENCE [LARGE SCALE GENOMIC DNA]</scope>
    <source>
        <strain>ATCC 33912 / PCC 7942 / FACHB-805</strain>
    </source>
</reference>
<gene>
    <name evidence="1" type="primary">thiC</name>
    <name type="ordered locus">Synpcc7942_1096</name>
</gene>
<proteinExistence type="inferred from homology"/>
<evidence type="ECO:0000255" key="1">
    <source>
        <dbReference type="HAMAP-Rule" id="MF_00089"/>
    </source>
</evidence>
<protein>
    <recommendedName>
        <fullName evidence="1">Phosphomethylpyrimidine synthase</fullName>
        <ecNumber evidence="1">4.1.99.17</ecNumber>
    </recommendedName>
    <alternativeName>
        <fullName evidence="1">Hydroxymethylpyrimidine phosphate synthase</fullName>
        <shortName evidence="1">HMP-P synthase</shortName>
        <shortName evidence="1">HMP-phosphate synthase</shortName>
        <shortName evidence="1">HMPP synthase</shortName>
    </alternativeName>
    <alternativeName>
        <fullName evidence="1">Thiamine biosynthesis protein ThiC</fullName>
    </alternativeName>
</protein>
<sequence>MRSDWIAPRRGQANVTQMHYARQGVITEEMDFVARRENLPADLIRDEVARGRMIIPANINHTNLEPMAIGIASKCKVNANIGASPNASNIDEEVEKLKLAVKYGADTVMDLSTGGGNLDEIRTAIINASPVPIGTVPVYQALESVHGRIEKLSADDFLHVIEKHCEQGVDYQTIHAGLLIEHLPKVKSRITGIVSRGGGIIAQWMLYHHKQNPLYTHFRDIIEIFKRYDCSFSLGDSLRPGCLHDASDDAQLSELKTLGQLTRVAWEHDVQVMVEGPGHVPMDQIEFNVRKQMEECSEAPFYVLGPLVTDIAPGYDHITSAIGAAMAGWYGTAMLCYVTPKEHLGLPNAEDVRNGLIAYKIAAHAADIARHRPGARDRDDELSRARYAFDWNKQFDLSLDPERAREYHDETLPADIYKTAEFCSMCGPKHCPMQTKITEEDLTELEKFLEKDSALA</sequence>
<name>THIC_SYNE7</name>
<accession>Q31P93</accession>
<comment type="function">
    <text evidence="1">Catalyzes the synthesis of the hydroxymethylpyrimidine phosphate (HMP-P) moiety of thiamine from aminoimidazole ribotide (AIR) in a radical S-adenosyl-L-methionine (SAM)-dependent reaction.</text>
</comment>
<comment type="catalytic activity">
    <reaction evidence="1">
        <text>5-amino-1-(5-phospho-beta-D-ribosyl)imidazole + S-adenosyl-L-methionine = 4-amino-2-methyl-5-(phosphooxymethyl)pyrimidine + CO + 5'-deoxyadenosine + formate + L-methionine + 3 H(+)</text>
        <dbReference type="Rhea" id="RHEA:24840"/>
        <dbReference type="ChEBI" id="CHEBI:15378"/>
        <dbReference type="ChEBI" id="CHEBI:15740"/>
        <dbReference type="ChEBI" id="CHEBI:17245"/>
        <dbReference type="ChEBI" id="CHEBI:17319"/>
        <dbReference type="ChEBI" id="CHEBI:57844"/>
        <dbReference type="ChEBI" id="CHEBI:58354"/>
        <dbReference type="ChEBI" id="CHEBI:59789"/>
        <dbReference type="ChEBI" id="CHEBI:137981"/>
        <dbReference type="EC" id="4.1.99.17"/>
    </reaction>
</comment>
<comment type="cofactor">
    <cofactor evidence="1">
        <name>[4Fe-4S] cluster</name>
        <dbReference type="ChEBI" id="CHEBI:49883"/>
    </cofactor>
    <text evidence="1">Binds 1 [4Fe-4S] cluster per subunit. The cluster is coordinated with 3 cysteines and an exchangeable S-adenosyl-L-methionine.</text>
</comment>
<comment type="pathway">
    <text evidence="1">Cofactor biosynthesis; thiamine diphosphate biosynthesis.</text>
</comment>
<comment type="similarity">
    <text evidence="1">Belongs to the ThiC family.</text>
</comment>
<keyword id="KW-0004">4Fe-4S</keyword>
<keyword id="KW-0408">Iron</keyword>
<keyword id="KW-0411">Iron-sulfur</keyword>
<keyword id="KW-0456">Lyase</keyword>
<keyword id="KW-0479">Metal-binding</keyword>
<keyword id="KW-1185">Reference proteome</keyword>
<keyword id="KW-0949">S-adenosyl-L-methionine</keyword>
<keyword id="KW-0784">Thiamine biosynthesis</keyword>
<keyword id="KW-0862">Zinc</keyword>
<organism>
    <name type="scientific">Synechococcus elongatus (strain ATCC 33912 / PCC 7942 / FACHB-805)</name>
    <name type="common">Anacystis nidulans R2</name>
    <dbReference type="NCBI Taxonomy" id="1140"/>
    <lineage>
        <taxon>Bacteria</taxon>
        <taxon>Bacillati</taxon>
        <taxon>Cyanobacteriota</taxon>
        <taxon>Cyanophyceae</taxon>
        <taxon>Synechococcales</taxon>
        <taxon>Synechococcaceae</taxon>
        <taxon>Synechococcus</taxon>
    </lineage>
</organism>
<feature type="chain" id="PRO_0000242310" description="Phosphomethylpyrimidine synthase">
    <location>
        <begin position="1"/>
        <end position="456"/>
    </location>
</feature>
<feature type="binding site" evidence="1">
    <location>
        <position position="80"/>
    </location>
    <ligand>
        <name>substrate</name>
    </ligand>
</feature>
<feature type="binding site" evidence="1">
    <location>
        <position position="109"/>
    </location>
    <ligand>
        <name>substrate</name>
    </ligand>
</feature>
<feature type="binding site" evidence="1">
    <location>
        <position position="139"/>
    </location>
    <ligand>
        <name>substrate</name>
    </ligand>
</feature>
<feature type="binding site" evidence="1">
    <location>
        <position position="175"/>
    </location>
    <ligand>
        <name>substrate</name>
    </ligand>
</feature>
<feature type="binding site" evidence="1">
    <location>
        <begin position="195"/>
        <end position="197"/>
    </location>
    <ligand>
        <name>substrate</name>
    </ligand>
</feature>
<feature type="binding site" evidence="1">
    <location>
        <begin position="236"/>
        <end position="239"/>
    </location>
    <ligand>
        <name>substrate</name>
    </ligand>
</feature>
<feature type="binding site" evidence="1">
    <location>
        <position position="275"/>
    </location>
    <ligand>
        <name>substrate</name>
    </ligand>
</feature>
<feature type="binding site" evidence="1">
    <location>
        <position position="279"/>
    </location>
    <ligand>
        <name>Zn(2+)</name>
        <dbReference type="ChEBI" id="CHEBI:29105"/>
    </ligand>
</feature>
<feature type="binding site" evidence="1">
    <location>
        <position position="302"/>
    </location>
    <ligand>
        <name>substrate</name>
    </ligand>
</feature>
<feature type="binding site" evidence="1">
    <location>
        <position position="343"/>
    </location>
    <ligand>
        <name>Zn(2+)</name>
        <dbReference type="ChEBI" id="CHEBI:29105"/>
    </ligand>
</feature>
<feature type="binding site" evidence="1">
    <location>
        <position position="423"/>
    </location>
    <ligand>
        <name>[4Fe-4S] cluster</name>
        <dbReference type="ChEBI" id="CHEBI:49883"/>
        <note>4Fe-4S-S-AdoMet</note>
    </ligand>
</feature>
<feature type="binding site" evidence="1">
    <location>
        <position position="426"/>
    </location>
    <ligand>
        <name>[4Fe-4S] cluster</name>
        <dbReference type="ChEBI" id="CHEBI:49883"/>
        <note>4Fe-4S-S-AdoMet</note>
    </ligand>
</feature>
<feature type="binding site" evidence="1">
    <location>
        <position position="431"/>
    </location>
    <ligand>
        <name>[4Fe-4S] cluster</name>
        <dbReference type="ChEBI" id="CHEBI:49883"/>
        <note>4Fe-4S-S-AdoMet</note>
    </ligand>
</feature>